<protein>
    <recommendedName>
        <fullName evidence="1">Shikimate kinase</fullName>
        <shortName evidence="1">SK</shortName>
        <ecNumber evidence="1">2.7.1.71</ecNumber>
    </recommendedName>
</protein>
<keyword id="KW-0028">Amino-acid biosynthesis</keyword>
<keyword id="KW-0057">Aromatic amino acid biosynthesis</keyword>
<keyword id="KW-0067">ATP-binding</keyword>
<keyword id="KW-0963">Cytoplasm</keyword>
<keyword id="KW-0418">Kinase</keyword>
<keyword id="KW-0460">Magnesium</keyword>
<keyword id="KW-0479">Metal-binding</keyword>
<keyword id="KW-0547">Nucleotide-binding</keyword>
<keyword id="KW-1185">Reference proteome</keyword>
<keyword id="KW-0808">Transferase</keyword>
<organism>
    <name type="scientific">Corynebacterium glutamicum (strain ATCC 13032 / DSM 20300 / JCM 1318 / BCRC 11384 / CCUG 27702 / LMG 3730 / NBRC 12168 / NCIMB 10025 / NRRL B-2784 / 534)</name>
    <dbReference type="NCBI Taxonomy" id="196627"/>
    <lineage>
        <taxon>Bacteria</taxon>
        <taxon>Bacillati</taxon>
        <taxon>Actinomycetota</taxon>
        <taxon>Actinomycetes</taxon>
        <taxon>Mycobacteriales</taxon>
        <taxon>Corynebacteriaceae</taxon>
        <taxon>Corynebacterium</taxon>
    </lineage>
</organism>
<accession>Q9X5D1</accession>
<feature type="chain" id="PRO_0000192376" description="Shikimate kinase">
    <location>
        <begin position="1"/>
        <end position="169"/>
    </location>
</feature>
<feature type="binding site" evidence="1">
    <location>
        <begin position="13"/>
        <end position="18"/>
    </location>
    <ligand>
        <name>ATP</name>
        <dbReference type="ChEBI" id="CHEBI:30616"/>
    </ligand>
</feature>
<feature type="binding site" evidence="1">
    <location>
        <position position="17"/>
    </location>
    <ligand>
        <name>Mg(2+)</name>
        <dbReference type="ChEBI" id="CHEBI:18420"/>
    </ligand>
</feature>
<feature type="binding site" evidence="1">
    <location>
        <position position="35"/>
    </location>
    <ligand>
        <name>substrate</name>
    </ligand>
</feature>
<feature type="binding site" evidence="1">
    <location>
        <position position="59"/>
    </location>
    <ligand>
        <name>substrate</name>
    </ligand>
</feature>
<feature type="binding site" evidence="1">
    <location>
        <position position="80"/>
    </location>
    <ligand>
        <name>substrate</name>
    </ligand>
</feature>
<feature type="binding site" evidence="1">
    <location>
        <position position="117"/>
    </location>
    <ligand>
        <name>ATP</name>
        <dbReference type="ChEBI" id="CHEBI:30616"/>
    </ligand>
</feature>
<feature type="binding site" evidence="1">
    <location>
        <position position="136"/>
    </location>
    <ligand>
        <name>substrate</name>
    </ligand>
</feature>
<feature type="binding site" evidence="1">
    <location>
        <position position="153"/>
    </location>
    <ligand>
        <name>ATP</name>
        <dbReference type="ChEBI" id="CHEBI:30616"/>
    </ligand>
</feature>
<feature type="sequence conflict" description="In Ref. 2 and 3." evidence="2" ref="2 3">
    <original>MLL</original>
    <variation>MERNEVNDQIHLDHQSDDTSECSC</variation>
    <location>
        <begin position="1"/>
        <end position="3"/>
    </location>
</feature>
<comment type="function">
    <text evidence="1">Catalyzes the specific phosphorylation of the 3-hydroxyl group of shikimic acid using ATP as a cosubstrate.</text>
</comment>
<comment type="catalytic activity">
    <reaction evidence="1">
        <text>shikimate + ATP = 3-phosphoshikimate + ADP + H(+)</text>
        <dbReference type="Rhea" id="RHEA:13121"/>
        <dbReference type="ChEBI" id="CHEBI:15378"/>
        <dbReference type="ChEBI" id="CHEBI:30616"/>
        <dbReference type="ChEBI" id="CHEBI:36208"/>
        <dbReference type="ChEBI" id="CHEBI:145989"/>
        <dbReference type="ChEBI" id="CHEBI:456216"/>
        <dbReference type="EC" id="2.7.1.71"/>
    </reaction>
</comment>
<comment type="cofactor">
    <cofactor evidence="1">
        <name>Mg(2+)</name>
        <dbReference type="ChEBI" id="CHEBI:18420"/>
    </cofactor>
    <text evidence="1">Binds 1 Mg(2+) ion per subunit.</text>
</comment>
<comment type="pathway">
    <text evidence="1">Metabolic intermediate biosynthesis; chorismate biosynthesis; chorismate from D-erythrose 4-phosphate and phosphoenolpyruvate: step 5/7.</text>
</comment>
<comment type="subunit">
    <text evidence="1">Monomer.</text>
</comment>
<comment type="subcellular location">
    <subcellularLocation>
        <location evidence="1">Cytoplasm</location>
    </subcellularLocation>
</comment>
<comment type="similarity">
    <text evidence="1">Belongs to the shikimate kinase family.</text>
</comment>
<comment type="sequence caution" evidence="2">
    <conflict type="erroneous initiation">
        <sequence resource="EMBL-CDS" id="CAF21631"/>
    </conflict>
</comment>
<gene>
    <name evidence="1" type="primary">aroK</name>
    <name type="ordered locus">Cgl1622</name>
    <name type="ordered locus">cg1828</name>
</gene>
<name>AROK_CORGL</name>
<reference key="1">
    <citation type="submission" date="1999-01" db="EMBL/GenBank/DDBJ databases">
        <title>Genetic aspects of the prechorismate pathway in Corynebacterium glutamicum.</title>
        <authorList>
            <person name="Burke K.G."/>
            <person name="Joy J."/>
            <person name="O'Donohue M.R."/>
            <person name="Dunican L.K."/>
        </authorList>
    </citation>
    <scope>NUCLEOTIDE SEQUENCE [GENOMIC DNA]</scope>
    <source>
        <strain>ATCC 13059 / LMG 3658 / NCIB 10332 / AS019 / 613</strain>
    </source>
</reference>
<reference key="2">
    <citation type="journal article" date="2003" name="Appl. Microbiol. Biotechnol.">
        <title>The Corynebacterium glutamicum genome: features and impacts on biotechnological processes.</title>
        <authorList>
            <person name="Ikeda M."/>
            <person name="Nakagawa S."/>
        </authorList>
    </citation>
    <scope>NUCLEOTIDE SEQUENCE [LARGE SCALE GENOMIC DNA]</scope>
    <source>
        <strain>ATCC 13032 / DSM 20300 / JCM 1318 / BCRC 11384 / CCUG 27702 / LMG 3730 / NBRC 12168 / NCIMB 10025 / NRRL B-2784 / 534</strain>
    </source>
</reference>
<reference key="3">
    <citation type="journal article" date="2003" name="J. Biotechnol.">
        <title>The complete Corynebacterium glutamicum ATCC 13032 genome sequence and its impact on the production of L-aspartate-derived amino acids and vitamins.</title>
        <authorList>
            <person name="Kalinowski J."/>
            <person name="Bathe B."/>
            <person name="Bartels D."/>
            <person name="Bischoff N."/>
            <person name="Bott M."/>
            <person name="Burkovski A."/>
            <person name="Dusch N."/>
            <person name="Eggeling L."/>
            <person name="Eikmanns B.J."/>
            <person name="Gaigalat L."/>
            <person name="Goesmann A."/>
            <person name="Hartmann M."/>
            <person name="Huthmacher K."/>
            <person name="Kraemer R."/>
            <person name="Linke B."/>
            <person name="McHardy A.C."/>
            <person name="Meyer F."/>
            <person name="Moeckel B."/>
            <person name="Pfefferle W."/>
            <person name="Puehler A."/>
            <person name="Rey D.A."/>
            <person name="Rueckert C."/>
            <person name="Rupp O."/>
            <person name="Sahm H."/>
            <person name="Wendisch V.F."/>
            <person name="Wiegraebe I."/>
            <person name="Tauch A."/>
        </authorList>
    </citation>
    <scope>NUCLEOTIDE SEQUENCE [LARGE SCALE GENOMIC DNA]</scope>
    <source>
        <strain>ATCC 13032 / DSM 20300 / JCM 1318 / BCRC 11384 / CCUG 27702 / LMG 3730 / NBRC 12168 / NCIMB 10025 / NRRL B-2784 / 534</strain>
    </source>
</reference>
<dbReference type="EC" id="2.7.1.71" evidence="1"/>
<dbReference type="EMBL" id="AF124600">
    <property type="protein sequence ID" value="AAD27839.1"/>
    <property type="molecule type" value="Genomic_DNA"/>
</dbReference>
<dbReference type="EMBL" id="BA000036">
    <property type="protein sequence ID" value="BAB99015.1"/>
    <property type="molecule type" value="Genomic_DNA"/>
</dbReference>
<dbReference type="EMBL" id="BX927152">
    <property type="protein sequence ID" value="CAF21631.1"/>
    <property type="status" value="ALT_INIT"/>
    <property type="molecule type" value="Genomic_DNA"/>
</dbReference>
<dbReference type="RefSeq" id="NP_600836.1">
    <property type="nucleotide sequence ID" value="NC_003450.3"/>
</dbReference>
<dbReference type="SMR" id="Q9X5D1"/>
<dbReference type="STRING" id="196627.cg1828"/>
<dbReference type="KEGG" id="cgb:cg1828"/>
<dbReference type="KEGG" id="cgl:Cgl1622"/>
<dbReference type="PATRIC" id="fig|196627.13.peg.1584"/>
<dbReference type="eggNOG" id="COG0703">
    <property type="taxonomic scope" value="Bacteria"/>
</dbReference>
<dbReference type="HOGENOM" id="CLU_057607_3_0_11"/>
<dbReference type="OrthoDB" id="9800332at2"/>
<dbReference type="BioCyc" id="CORYNE:G18NG-11207-MONOMER"/>
<dbReference type="UniPathway" id="UPA00053">
    <property type="reaction ID" value="UER00088"/>
</dbReference>
<dbReference type="Proteomes" id="UP000000582">
    <property type="component" value="Chromosome"/>
</dbReference>
<dbReference type="Proteomes" id="UP000001009">
    <property type="component" value="Chromosome"/>
</dbReference>
<dbReference type="GO" id="GO:0005829">
    <property type="term" value="C:cytosol"/>
    <property type="evidence" value="ECO:0007669"/>
    <property type="project" value="TreeGrafter"/>
</dbReference>
<dbReference type="GO" id="GO:0005524">
    <property type="term" value="F:ATP binding"/>
    <property type="evidence" value="ECO:0007669"/>
    <property type="project" value="UniProtKB-UniRule"/>
</dbReference>
<dbReference type="GO" id="GO:0000287">
    <property type="term" value="F:magnesium ion binding"/>
    <property type="evidence" value="ECO:0007669"/>
    <property type="project" value="UniProtKB-UniRule"/>
</dbReference>
<dbReference type="GO" id="GO:0004765">
    <property type="term" value="F:shikimate kinase activity"/>
    <property type="evidence" value="ECO:0007669"/>
    <property type="project" value="UniProtKB-UniRule"/>
</dbReference>
<dbReference type="GO" id="GO:0008652">
    <property type="term" value="P:amino acid biosynthetic process"/>
    <property type="evidence" value="ECO:0007669"/>
    <property type="project" value="UniProtKB-KW"/>
</dbReference>
<dbReference type="GO" id="GO:0009073">
    <property type="term" value="P:aromatic amino acid family biosynthetic process"/>
    <property type="evidence" value="ECO:0007669"/>
    <property type="project" value="UniProtKB-KW"/>
</dbReference>
<dbReference type="GO" id="GO:0009423">
    <property type="term" value="P:chorismate biosynthetic process"/>
    <property type="evidence" value="ECO:0007669"/>
    <property type="project" value="UniProtKB-UniRule"/>
</dbReference>
<dbReference type="CDD" id="cd00464">
    <property type="entry name" value="SK"/>
    <property type="match status" value="1"/>
</dbReference>
<dbReference type="Gene3D" id="3.40.50.300">
    <property type="entry name" value="P-loop containing nucleotide triphosphate hydrolases"/>
    <property type="match status" value="1"/>
</dbReference>
<dbReference type="HAMAP" id="MF_00109">
    <property type="entry name" value="Shikimate_kinase"/>
    <property type="match status" value="1"/>
</dbReference>
<dbReference type="InterPro" id="IPR027417">
    <property type="entry name" value="P-loop_NTPase"/>
</dbReference>
<dbReference type="InterPro" id="IPR031322">
    <property type="entry name" value="Shikimate/glucono_kinase"/>
</dbReference>
<dbReference type="InterPro" id="IPR000623">
    <property type="entry name" value="Shikimate_kinase/TSH1"/>
</dbReference>
<dbReference type="InterPro" id="IPR023000">
    <property type="entry name" value="Shikimate_kinase_CS"/>
</dbReference>
<dbReference type="PANTHER" id="PTHR21087">
    <property type="entry name" value="SHIKIMATE KINASE"/>
    <property type="match status" value="1"/>
</dbReference>
<dbReference type="PANTHER" id="PTHR21087:SF16">
    <property type="entry name" value="SHIKIMATE KINASE 1, CHLOROPLASTIC"/>
    <property type="match status" value="1"/>
</dbReference>
<dbReference type="Pfam" id="PF01202">
    <property type="entry name" value="SKI"/>
    <property type="match status" value="1"/>
</dbReference>
<dbReference type="PRINTS" id="PR01100">
    <property type="entry name" value="SHIKIMTKNASE"/>
</dbReference>
<dbReference type="SUPFAM" id="SSF52540">
    <property type="entry name" value="P-loop containing nucleoside triphosphate hydrolases"/>
    <property type="match status" value="1"/>
</dbReference>
<dbReference type="PROSITE" id="PS01128">
    <property type="entry name" value="SHIKIMATE_KINASE"/>
    <property type="match status" value="1"/>
</dbReference>
<sequence length="169" mass="18382">MLLPIVVLVGLPGAGKSTIGRRLARALNTELVDSDELIERATGKACGAVFSELGEPAFRELEAIHVAEALKSSGVVSLGGGSVLTESTRELLKGQDVVWIDVPVEEGIRRTANERSRPVLQAADPAEHYRNLVKVRTPLYEEVATYRLRTNNRSPQQVVAAVLHHLEID</sequence>
<evidence type="ECO:0000255" key="1">
    <source>
        <dbReference type="HAMAP-Rule" id="MF_00109"/>
    </source>
</evidence>
<evidence type="ECO:0000305" key="2"/>
<proteinExistence type="inferred from homology"/>